<accession>A1SJG2</accession>
<gene>
    <name evidence="1" type="primary">fmt</name>
    <name type="ordered locus">Noca_2442</name>
</gene>
<feature type="chain" id="PRO_1000020113" description="Methionyl-tRNA formyltransferase">
    <location>
        <begin position="1"/>
        <end position="316"/>
    </location>
</feature>
<feature type="binding site" evidence="1">
    <location>
        <begin position="109"/>
        <end position="112"/>
    </location>
    <ligand>
        <name>(6S)-5,6,7,8-tetrahydrofolate</name>
        <dbReference type="ChEBI" id="CHEBI:57453"/>
    </ligand>
</feature>
<comment type="function">
    <text evidence="1">Attaches a formyl group to the free amino group of methionyl-tRNA(fMet). The formyl group appears to play a dual role in the initiator identity of N-formylmethionyl-tRNA by promoting its recognition by IF2 and preventing the misappropriation of this tRNA by the elongation apparatus.</text>
</comment>
<comment type="catalytic activity">
    <reaction evidence="1">
        <text>L-methionyl-tRNA(fMet) + (6R)-10-formyltetrahydrofolate = N-formyl-L-methionyl-tRNA(fMet) + (6S)-5,6,7,8-tetrahydrofolate + H(+)</text>
        <dbReference type="Rhea" id="RHEA:24380"/>
        <dbReference type="Rhea" id="RHEA-COMP:9952"/>
        <dbReference type="Rhea" id="RHEA-COMP:9953"/>
        <dbReference type="ChEBI" id="CHEBI:15378"/>
        <dbReference type="ChEBI" id="CHEBI:57453"/>
        <dbReference type="ChEBI" id="CHEBI:78530"/>
        <dbReference type="ChEBI" id="CHEBI:78844"/>
        <dbReference type="ChEBI" id="CHEBI:195366"/>
        <dbReference type="EC" id="2.1.2.9"/>
    </reaction>
</comment>
<comment type="similarity">
    <text evidence="1">Belongs to the Fmt family.</text>
</comment>
<reference key="1">
    <citation type="submission" date="2006-12" db="EMBL/GenBank/DDBJ databases">
        <title>Complete sequence of chromosome 1 of Nocardioides sp. JS614.</title>
        <authorList>
            <person name="Copeland A."/>
            <person name="Lucas S."/>
            <person name="Lapidus A."/>
            <person name="Barry K."/>
            <person name="Detter J.C."/>
            <person name="Glavina del Rio T."/>
            <person name="Hammon N."/>
            <person name="Israni S."/>
            <person name="Dalin E."/>
            <person name="Tice H."/>
            <person name="Pitluck S."/>
            <person name="Thompson L.S."/>
            <person name="Brettin T."/>
            <person name="Bruce D."/>
            <person name="Han C."/>
            <person name="Tapia R."/>
            <person name="Schmutz J."/>
            <person name="Larimer F."/>
            <person name="Land M."/>
            <person name="Hauser L."/>
            <person name="Kyrpides N."/>
            <person name="Kim E."/>
            <person name="Mattes T."/>
            <person name="Gossett J."/>
            <person name="Richardson P."/>
        </authorList>
    </citation>
    <scope>NUCLEOTIDE SEQUENCE [LARGE SCALE GENOMIC DNA]</scope>
    <source>
        <strain>ATCC BAA-499 / JS614</strain>
    </source>
</reference>
<dbReference type="EC" id="2.1.2.9" evidence="1"/>
<dbReference type="EMBL" id="CP000509">
    <property type="protein sequence ID" value="ABL81947.1"/>
    <property type="molecule type" value="Genomic_DNA"/>
</dbReference>
<dbReference type="RefSeq" id="WP_011755888.1">
    <property type="nucleotide sequence ID" value="NC_008699.1"/>
</dbReference>
<dbReference type="SMR" id="A1SJG2"/>
<dbReference type="STRING" id="196162.Noca_2442"/>
<dbReference type="KEGG" id="nca:Noca_2442"/>
<dbReference type="eggNOG" id="COG0223">
    <property type="taxonomic scope" value="Bacteria"/>
</dbReference>
<dbReference type="HOGENOM" id="CLU_033347_1_1_11"/>
<dbReference type="OrthoDB" id="9802815at2"/>
<dbReference type="Proteomes" id="UP000000640">
    <property type="component" value="Chromosome"/>
</dbReference>
<dbReference type="GO" id="GO:0005829">
    <property type="term" value="C:cytosol"/>
    <property type="evidence" value="ECO:0007669"/>
    <property type="project" value="TreeGrafter"/>
</dbReference>
<dbReference type="GO" id="GO:0004479">
    <property type="term" value="F:methionyl-tRNA formyltransferase activity"/>
    <property type="evidence" value="ECO:0007669"/>
    <property type="project" value="UniProtKB-UniRule"/>
</dbReference>
<dbReference type="CDD" id="cd08646">
    <property type="entry name" value="FMT_core_Met-tRNA-FMT_N"/>
    <property type="match status" value="1"/>
</dbReference>
<dbReference type="CDD" id="cd08704">
    <property type="entry name" value="Met_tRNA_FMT_C"/>
    <property type="match status" value="1"/>
</dbReference>
<dbReference type="FunFam" id="3.40.50.12230:FF:000001">
    <property type="entry name" value="Methionyl-tRNA formyltransferase"/>
    <property type="match status" value="1"/>
</dbReference>
<dbReference type="Gene3D" id="3.40.50.12230">
    <property type="match status" value="1"/>
</dbReference>
<dbReference type="HAMAP" id="MF_00182">
    <property type="entry name" value="Formyl_trans"/>
    <property type="match status" value="1"/>
</dbReference>
<dbReference type="InterPro" id="IPR005794">
    <property type="entry name" value="Fmt"/>
</dbReference>
<dbReference type="InterPro" id="IPR005793">
    <property type="entry name" value="Formyl_trans_C"/>
</dbReference>
<dbReference type="InterPro" id="IPR002376">
    <property type="entry name" value="Formyl_transf_N"/>
</dbReference>
<dbReference type="InterPro" id="IPR036477">
    <property type="entry name" value="Formyl_transf_N_sf"/>
</dbReference>
<dbReference type="InterPro" id="IPR011034">
    <property type="entry name" value="Formyl_transferase-like_C_sf"/>
</dbReference>
<dbReference type="InterPro" id="IPR044135">
    <property type="entry name" value="Met-tRNA-FMT_C"/>
</dbReference>
<dbReference type="InterPro" id="IPR041711">
    <property type="entry name" value="Met-tRNA-FMT_N"/>
</dbReference>
<dbReference type="NCBIfam" id="TIGR00460">
    <property type="entry name" value="fmt"/>
    <property type="match status" value="1"/>
</dbReference>
<dbReference type="PANTHER" id="PTHR11138">
    <property type="entry name" value="METHIONYL-TRNA FORMYLTRANSFERASE"/>
    <property type="match status" value="1"/>
</dbReference>
<dbReference type="PANTHER" id="PTHR11138:SF5">
    <property type="entry name" value="METHIONYL-TRNA FORMYLTRANSFERASE, MITOCHONDRIAL"/>
    <property type="match status" value="1"/>
</dbReference>
<dbReference type="Pfam" id="PF02911">
    <property type="entry name" value="Formyl_trans_C"/>
    <property type="match status" value="1"/>
</dbReference>
<dbReference type="Pfam" id="PF00551">
    <property type="entry name" value="Formyl_trans_N"/>
    <property type="match status" value="1"/>
</dbReference>
<dbReference type="SUPFAM" id="SSF50486">
    <property type="entry name" value="FMT C-terminal domain-like"/>
    <property type="match status" value="1"/>
</dbReference>
<dbReference type="SUPFAM" id="SSF53328">
    <property type="entry name" value="Formyltransferase"/>
    <property type="match status" value="1"/>
</dbReference>
<organism>
    <name type="scientific">Nocardioides sp. (strain ATCC BAA-499 / JS614)</name>
    <dbReference type="NCBI Taxonomy" id="196162"/>
    <lineage>
        <taxon>Bacteria</taxon>
        <taxon>Bacillati</taxon>
        <taxon>Actinomycetota</taxon>
        <taxon>Actinomycetes</taxon>
        <taxon>Propionibacteriales</taxon>
        <taxon>Nocardioidaceae</taxon>
        <taxon>Nocardioides</taxon>
    </lineage>
</organism>
<sequence>MRVVFAGTPEVAIPVLDAVAASSHELVAVVTRPDAPAGRGRRLLASPVALRAEELGVPVLKPAHPKDPEFQEQLRALRPDCCPVVAYGALLPQAALDIPVHGWVNLHFSALPAWRGAAPVQHAIWAGDEVTGATTFRIVKELDAGPTYGVMTERIRPTDTAGDLLARLAEGGAGLMVATLDGIEDGSLEARPQQAEGVSYAPKVEVEDARVDWSRPAVVIDHQVRACTPAPGAWTTVAGERLKLGPVTHADAHGSQGLGPGELGVGKHDVLVGTGTTAVRLGDVRPHGRKQMAAADWARGARLQTGVRIGVAFGES</sequence>
<proteinExistence type="inferred from homology"/>
<protein>
    <recommendedName>
        <fullName evidence="1">Methionyl-tRNA formyltransferase</fullName>
        <ecNumber evidence="1">2.1.2.9</ecNumber>
    </recommendedName>
</protein>
<evidence type="ECO:0000255" key="1">
    <source>
        <dbReference type="HAMAP-Rule" id="MF_00182"/>
    </source>
</evidence>
<name>FMT_NOCSJ</name>
<keyword id="KW-0648">Protein biosynthesis</keyword>
<keyword id="KW-1185">Reference proteome</keyword>
<keyword id="KW-0808">Transferase</keyword>